<name>URM1_DROGR</name>
<sequence length="104" mass="11675">MGSKETPDLKIILEFGAGAELLFGNIKKRQLSLNGAQKWTIAELLKWMHANILTERAELFIQGDTVRPGILVLINDTDWELLGELEYELQPNDNVLFISTLHGG</sequence>
<proteinExistence type="inferred from homology"/>
<organism>
    <name type="scientific">Drosophila grimshawi</name>
    <name type="common">Hawaiian fruit fly</name>
    <name type="synonym">Idiomyia grimshawi</name>
    <dbReference type="NCBI Taxonomy" id="7222"/>
    <lineage>
        <taxon>Eukaryota</taxon>
        <taxon>Metazoa</taxon>
        <taxon>Ecdysozoa</taxon>
        <taxon>Arthropoda</taxon>
        <taxon>Hexapoda</taxon>
        <taxon>Insecta</taxon>
        <taxon>Pterygota</taxon>
        <taxon>Neoptera</taxon>
        <taxon>Endopterygota</taxon>
        <taxon>Diptera</taxon>
        <taxon>Brachycera</taxon>
        <taxon>Muscomorpha</taxon>
        <taxon>Ephydroidea</taxon>
        <taxon>Drosophilidae</taxon>
        <taxon>Drosophila</taxon>
        <taxon>Hawaiian Drosophila</taxon>
    </lineage>
</organism>
<feature type="chain" id="PRO_0000367857" description="Ubiquitin-related modifier 1 homolog">
    <location>
        <begin position="1"/>
        <end position="104"/>
    </location>
</feature>
<feature type="modified residue" description="1-thioglycine" evidence="2">
    <location>
        <position position="104"/>
    </location>
</feature>
<feature type="cross-link" description="Glycyl lysine isopeptide (Gly-Lys) (interchain with K-? in acceptor proteins)" evidence="2">
    <location>
        <position position="104"/>
    </location>
</feature>
<gene>
    <name evidence="1" type="primary">Urm1</name>
    <name type="ORF">GH16604</name>
</gene>
<protein>
    <recommendedName>
        <fullName evidence="2">Ubiquitin-related modifier 1 homolog</fullName>
    </recommendedName>
</protein>
<keyword id="KW-0963">Cytoplasm</keyword>
<keyword id="KW-1017">Isopeptide bond</keyword>
<keyword id="KW-1185">Reference proteome</keyword>
<keyword id="KW-0819">tRNA processing</keyword>
<keyword id="KW-0833">Ubl conjugation pathway</keyword>
<dbReference type="EMBL" id="CH916366">
    <property type="protein sequence ID" value="EDV97023.1"/>
    <property type="molecule type" value="Genomic_DNA"/>
</dbReference>
<dbReference type="SMR" id="B4J272"/>
<dbReference type="FunCoup" id="B4J272">
    <property type="interactions" value="1386"/>
</dbReference>
<dbReference type="STRING" id="7222.B4J272"/>
<dbReference type="EnsemblMetazoa" id="FBtr0152018">
    <property type="protein sequence ID" value="FBpp0150510"/>
    <property type="gene ID" value="FBgn0124075"/>
</dbReference>
<dbReference type="EnsemblMetazoa" id="XM_001984639.3">
    <property type="protein sequence ID" value="XP_001984675.1"/>
    <property type="gene ID" value="LOC6558782"/>
</dbReference>
<dbReference type="GeneID" id="6558782"/>
<dbReference type="KEGG" id="dgr:6558782"/>
<dbReference type="CTD" id="81605"/>
<dbReference type="eggNOG" id="KOG4146">
    <property type="taxonomic scope" value="Eukaryota"/>
</dbReference>
<dbReference type="HOGENOM" id="CLU_148208_0_1_1"/>
<dbReference type="InParanoid" id="B4J272"/>
<dbReference type="OMA" id="DYELQPN"/>
<dbReference type="OrthoDB" id="10248987at2759"/>
<dbReference type="PhylomeDB" id="B4J272"/>
<dbReference type="UniPathway" id="UPA00988"/>
<dbReference type="Proteomes" id="UP000001070">
    <property type="component" value="Unassembled WGS sequence"/>
</dbReference>
<dbReference type="GO" id="GO:0005829">
    <property type="term" value="C:cytosol"/>
    <property type="evidence" value="ECO:0007669"/>
    <property type="project" value="UniProtKB-UniRule"/>
</dbReference>
<dbReference type="GO" id="GO:0046329">
    <property type="term" value="P:negative regulation of JNK cascade"/>
    <property type="evidence" value="ECO:0007669"/>
    <property type="project" value="EnsemblMetazoa"/>
</dbReference>
<dbReference type="GO" id="GO:0032447">
    <property type="term" value="P:protein urmylation"/>
    <property type="evidence" value="ECO:0007669"/>
    <property type="project" value="UniProtKB-UniRule"/>
</dbReference>
<dbReference type="GO" id="GO:0034227">
    <property type="term" value="P:tRNA thio-modification"/>
    <property type="evidence" value="ECO:0007669"/>
    <property type="project" value="UniProtKB-UniRule"/>
</dbReference>
<dbReference type="GO" id="GO:0002098">
    <property type="term" value="P:tRNA wobble uridine modification"/>
    <property type="evidence" value="ECO:0007669"/>
    <property type="project" value="UniProtKB-UniRule"/>
</dbReference>
<dbReference type="CDD" id="cd01764">
    <property type="entry name" value="Ubl_Urm1"/>
    <property type="match status" value="1"/>
</dbReference>
<dbReference type="FunFam" id="3.10.20.30:FF:000021">
    <property type="entry name" value="Ubiquitin-related modifier 1"/>
    <property type="match status" value="1"/>
</dbReference>
<dbReference type="Gene3D" id="3.10.20.30">
    <property type="match status" value="1"/>
</dbReference>
<dbReference type="HAMAP" id="MF_03048">
    <property type="entry name" value="Urm1"/>
    <property type="match status" value="1"/>
</dbReference>
<dbReference type="InterPro" id="IPR012675">
    <property type="entry name" value="Beta-grasp_dom_sf"/>
</dbReference>
<dbReference type="InterPro" id="IPR016155">
    <property type="entry name" value="Mopterin_synth/thiamin_S_b"/>
</dbReference>
<dbReference type="InterPro" id="IPR015221">
    <property type="entry name" value="Urm1"/>
</dbReference>
<dbReference type="PANTHER" id="PTHR14986">
    <property type="entry name" value="RURM1 PROTEIN"/>
    <property type="match status" value="1"/>
</dbReference>
<dbReference type="Pfam" id="PF09138">
    <property type="entry name" value="Urm1"/>
    <property type="match status" value="1"/>
</dbReference>
<dbReference type="PIRSF" id="PIRSF037379">
    <property type="entry name" value="Ubiquitin-related_modifier_1"/>
    <property type="match status" value="1"/>
</dbReference>
<dbReference type="SUPFAM" id="SSF54285">
    <property type="entry name" value="MoaD/ThiS"/>
    <property type="match status" value="1"/>
</dbReference>
<comment type="function">
    <text evidence="2">Acts as a sulfur carrier required for 2-thiolation of mcm(5)S(2)U at tRNA wobble positions of cytosolic tRNA(Lys), tRNA(Glu) and tRNA(Gln). Serves as sulfur donor in tRNA 2-thiolation reaction by being thiocarboxylated (-COSH) at its C-terminus by MOCS3. The sulfur is then transferred to tRNA to form 2-thiolation of mcm(5)S(2)U. Also acts as a ubiquitin-like protein (UBL) that is covalently conjugated via an isopeptide bond to lysine residues of target proteins such as Prx2/Jafrac1, Ciao1, Eip71CD and GILT1. The thiocarboxylated form serves as substrate for conjugation and oxidative stress specifically induces the formation of UBL-protein conjugates.</text>
</comment>
<comment type="pathway">
    <text evidence="2">tRNA modification; 5-methoxycarbonylmethyl-2-thiouridine-tRNA biosynthesis.</text>
</comment>
<comment type="subunit">
    <text evidence="1">Interacts with cer.</text>
</comment>
<comment type="subcellular location">
    <subcellularLocation>
        <location evidence="2">Cytoplasm</location>
    </subcellularLocation>
</comment>
<comment type="PTM">
    <text evidence="2">C-terminal thiocarboxylation occurs in 2 steps, it is first acyl-adenylated (-COAMP) via the hesA/moeB/thiF part of the MOCS3 homolog, then thiocarboxylated (-COSH) via the rhodanese domain of the MOCS3 homolog.</text>
</comment>
<comment type="similarity">
    <text evidence="2">Belongs to the URM1 family.</text>
</comment>
<evidence type="ECO:0000250" key="1">
    <source>
        <dbReference type="UniProtKB" id="Q7KU86"/>
    </source>
</evidence>
<evidence type="ECO:0000255" key="2">
    <source>
        <dbReference type="HAMAP-Rule" id="MF_03048"/>
    </source>
</evidence>
<reference key="1">
    <citation type="journal article" date="2007" name="Nature">
        <title>Evolution of genes and genomes on the Drosophila phylogeny.</title>
        <authorList>
            <consortium name="Drosophila 12 genomes consortium"/>
        </authorList>
    </citation>
    <scope>NUCLEOTIDE SEQUENCE [LARGE SCALE GENOMIC DNA]</scope>
    <source>
        <strain>Tucson 15287-2541.00</strain>
    </source>
</reference>
<accession>B4J272</accession>